<proteinExistence type="inferred from homology"/>
<comment type="similarity">
    <text evidence="1">Belongs to the bacterial ribosomal protein bL33 family.</text>
</comment>
<feature type="chain" id="PRO_0000356747" description="Large ribosomal subunit protein bL33A">
    <location>
        <begin position="1"/>
        <end position="50"/>
    </location>
</feature>
<reference key="1">
    <citation type="journal article" date="2006" name="Proc. Natl. Acad. Sci. U.S.A.">
        <title>Comparative genomics of the lactic acid bacteria.</title>
        <authorList>
            <person name="Makarova K.S."/>
            <person name="Slesarev A."/>
            <person name="Wolf Y.I."/>
            <person name="Sorokin A."/>
            <person name="Mirkin B."/>
            <person name="Koonin E.V."/>
            <person name="Pavlov A."/>
            <person name="Pavlova N."/>
            <person name="Karamychev V."/>
            <person name="Polouchine N."/>
            <person name="Shakhova V."/>
            <person name="Grigoriev I."/>
            <person name="Lou Y."/>
            <person name="Rohksar D."/>
            <person name="Lucas S."/>
            <person name="Huang K."/>
            <person name="Goodstein D.M."/>
            <person name="Hawkins T."/>
            <person name="Plengvidhya V."/>
            <person name="Welker D."/>
            <person name="Hughes J."/>
            <person name="Goh Y."/>
            <person name="Benson A."/>
            <person name="Baldwin K."/>
            <person name="Lee J.-H."/>
            <person name="Diaz-Muniz I."/>
            <person name="Dosti B."/>
            <person name="Smeianov V."/>
            <person name="Wechter W."/>
            <person name="Barabote R."/>
            <person name="Lorca G."/>
            <person name="Altermann E."/>
            <person name="Barrangou R."/>
            <person name="Ganesan B."/>
            <person name="Xie Y."/>
            <person name="Rawsthorne H."/>
            <person name="Tamir D."/>
            <person name="Parker C."/>
            <person name="Breidt F."/>
            <person name="Broadbent J.R."/>
            <person name="Hutkins R."/>
            <person name="O'Sullivan D."/>
            <person name="Steele J."/>
            <person name="Unlu G."/>
            <person name="Saier M.H. Jr."/>
            <person name="Klaenhammer T."/>
            <person name="Richardson P."/>
            <person name="Kozyavkin S."/>
            <person name="Weimer B.C."/>
            <person name="Mills D.A."/>
        </authorList>
    </citation>
    <scope>NUCLEOTIDE SEQUENCE [LARGE SCALE GENOMIC DNA]</scope>
    <source>
        <strain>ATCC BAA-491 / LMD-9</strain>
    </source>
</reference>
<organism>
    <name type="scientific">Streptococcus thermophilus (strain ATCC BAA-491 / LMD-9)</name>
    <dbReference type="NCBI Taxonomy" id="322159"/>
    <lineage>
        <taxon>Bacteria</taxon>
        <taxon>Bacillati</taxon>
        <taxon>Bacillota</taxon>
        <taxon>Bacilli</taxon>
        <taxon>Lactobacillales</taxon>
        <taxon>Streptococcaceae</taxon>
        <taxon>Streptococcus</taxon>
    </lineage>
</organism>
<protein>
    <recommendedName>
        <fullName evidence="1">Large ribosomal subunit protein bL33A</fullName>
    </recommendedName>
    <alternativeName>
        <fullName evidence="1">50S ribosomal protein L33 1</fullName>
    </alternativeName>
</protein>
<accession>Q03MJ7</accession>
<gene>
    <name evidence="1" type="primary">rpmG1</name>
    <name type="ordered locus">STER_0261</name>
</gene>
<sequence>MAQKKASLACADCGNRNYSISVSSTPKPTRLEVNKFCKNCKKYTLHKETR</sequence>
<dbReference type="EMBL" id="CP000419">
    <property type="protein sequence ID" value="ABJ65575.1"/>
    <property type="molecule type" value="Genomic_DNA"/>
</dbReference>
<dbReference type="SMR" id="Q03MJ7"/>
<dbReference type="KEGG" id="ste:STER_0261"/>
<dbReference type="HOGENOM" id="CLU_190949_0_1_9"/>
<dbReference type="GO" id="GO:0005737">
    <property type="term" value="C:cytoplasm"/>
    <property type="evidence" value="ECO:0007669"/>
    <property type="project" value="UniProtKB-ARBA"/>
</dbReference>
<dbReference type="GO" id="GO:1990904">
    <property type="term" value="C:ribonucleoprotein complex"/>
    <property type="evidence" value="ECO:0007669"/>
    <property type="project" value="UniProtKB-KW"/>
</dbReference>
<dbReference type="GO" id="GO:0005840">
    <property type="term" value="C:ribosome"/>
    <property type="evidence" value="ECO:0007669"/>
    <property type="project" value="UniProtKB-KW"/>
</dbReference>
<dbReference type="GO" id="GO:0003735">
    <property type="term" value="F:structural constituent of ribosome"/>
    <property type="evidence" value="ECO:0007669"/>
    <property type="project" value="InterPro"/>
</dbReference>
<dbReference type="GO" id="GO:0006412">
    <property type="term" value="P:translation"/>
    <property type="evidence" value="ECO:0007669"/>
    <property type="project" value="UniProtKB-UniRule"/>
</dbReference>
<dbReference type="Gene3D" id="2.20.28.120">
    <property type="entry name" value="Ribosomal protein L33"/>
    <property type="match status" value="1"/>
</dbReference>
<dbReference type="HAMAP" id="MF_00294">
    <property type="entry name" value="Ribosomal_bL33"/>
    <property type="match status" value="1"/>
</dbReference>
<dbReference type="InterPro" id="IPR001705">
    <property type="entry name" value="Ribosomal_bL33"/>
</dbReference>
<dbReference type="InterPro" id="IPR038584">
    <property type="entry name" value="Ribosomal_bL33_sf"/>
</dbReference>
<dbReference type="InterPro" id="IPR011332">
    <property type="entry name" value="Ribosomal_zn-bd"/>
</dbReference>
<dbReference type="NCBIfam" id="NF001764">
    <property type="entry name" value="PRK00504.1"/>
    <property type="match status" value="1"/>
</dbReference>
<dbReference type="NCBIfam" id="TIGR01023">
    <property type="entry name" value="rpmG_bact"/>
    <property type="match status" value="1"/>
</dbReference>
<dbReference type="Pfam" id="PF00471">
    <property type="entry name" value="Ribosomal_L33"/>
    <property type="match status" value="1"/>
</dbReference>
<dbReference type="SUPFAM" id="SSF57829">
    <property type="entry name" value="Zn-binding ribosomal proteins"/>
    <property type="match status" value="1"/>
</dbReference>
<evidence type="ECO:0000255" key="1">
    <source>
        <dbReference type="HAMAP-Rule" id="MF_00294"/>
    </source>
</evidence>
<name>RL331_STRTD</name>
<keyword id="KW-0687">Ribonucleoprotein</keyword>
<keyword id="KW-0689">Ribosomal protein</keyword>